<feature type="transit peptide" description="Mitochondrion" evidence="1">
    <location>
        <begin position="1"/>
        <end position="24"/>
    </location>
</feature>
<feature type="chain" id="PRO_0000356085" description="Small ribosomal subunit protein mS79 (rPPR3b)">
    <location>
        <begin position="25"/>
        <end position="394"/>
    </location>
</feature>
<feature type="repeat" description="PPR 1">
    <location>
        <begin position="105"/>
        <end position="139"/>
    </location>
</feature>
<feature type="repeat" description="PPR 2">
    <location>
        <begin position="140"/>
        <end position="170"/>
    </location>
</feature>
<feature type="repeat" description="PPR 3">
    <location>
        <begin position="176"/>
        <end position="210"/>
    </location>
</feature>
<feature type="repeat" description="PPR 4">
    <location>
        <begin position="211"/>
        <end position="245"/>
    </location>
</feature>
<feature type="repeat" description="PPR 5">
    <location>
        <begin position="246"/>
        <end position="280"/>
    </location>
</feature>
<feature type="repeat" description="PPR 6">
    <location>
        <begin position="281"/>
        <end position="315"/>
    </location>
</feature>
<feature type="repeat" description="PPR 7">
    <location>
        <begin position="316"/>
        <end position="350"/>
    </location>
</feature>
<feature type="repeat" description="PPR 8">
    <location>
        <begin position="351"/>
        <end position="385"/>
    </location>
</feature>
<feature type="sequence conflict" description="In Ref. 4; AAM67043." evidence="4" ref="4">
    <original>H</original>
    <variation>P</variation>
    <location>
        <position position="18"/>
    </location>
</feature>
<feature type="sequence conflict" description="In Ref. 4; AAM67043." evidence="4" ref="4">
    <original>A</original>
    <variation>V</variation>
    <location>
        <position position="141"/>
    </location>
</feature>
<feature type="sequence conflict" description="In Ref. 4; AAM67043." evidence="4" ref="4">
    <original>K</original>
    <variation>E</variation>
    <location>
        <position position="165"/>
    </location>
</feature>
<comment type="subunit">
    <text evidence="5">Component of the mitochondrial ribosome small subunit.</text>
</comment>
<comment type="subcellular location">
    <subcellularLocation>
        <location evidence="2">Mitochondrion</location>
    </subcellularLocation>
</comment>
<comment type="similarity">
    <text evidence="4">Belongs to the PPR family. P subfamily.</text>
</comment>
<comment type="online information" name="Pentatricopeptide repeat proteins">
    <link uri="https://ppr.plantenergy.uwa.edu.au"/>
</comment>
<proteinExistence type="evidence at protein level"/>
<accession>Q9LK57</accession>
<accession>Q8L8Z2</accession>
<sequence>MSSLSRFLLRGNFSFSTHTNRRFFSAVTAAAATPSPPKPSLITLVNDERDPKFITEKFKKACQAEWFRKNIAVYERTVRRLAAAKKFEWVEEILEEQNKYPNMSKEGFVARIINLYGRVGMFENAQKVFDEMPERNCKRTALSFNALLNACVNSKKFDLVEGIFKELPGKLSIEPDVASYNTLIKGLCGKGSFTEAVALIDEIENKGLKPDHITFNILLHESYTKGKFEEGEQIWARMVEKNVKRDIRSYNARLLGLAMENKSEEMVSLFDKLKGNELKPDVFTFTAMIKGFVSEGKLDEAITWYKEIEKNGCRPLKFVFNSLLPAICKAGDLESAYELCKEIFAKRLLVDEAVLQEVVDALVKGSKQDEAEEIVELAKTNDYLQCKLRLFPKE</sequence>
<organism>
    <name type="scientific">Arabidopsis thaliana</name>
    <name type="common">Mouse-ear cress</name>
    <dbReference type="NCBI Taxonomy" id="3702"/>
    <lineage>
        <taxon>Eukaryota</taxon>
        <taxon>Viridiplantae</taxon>
        <taxon>Streptophyta</taxon>
        <taxon>Embryophyta</taxon>
        <taxon>Tracheophyta</taxon>
        <taxon>Spermatophyta</taxon>
        <taxon>Magnoliopsida</taxon>
        <taxon>eudicotyledons</taxon>
        <taxon>Gunneridae</taxon>
        <taxon>Pentapetalae</taxon>
        <taxon>rosids</taxon>
        <taxon>malvids</taxon>
        <taxon>Brassicales</taxon>
        <taxon>Brassicaceae</taxon>
        <taxon>Camelineae</taxon>
        <taxon>Arabidopsis</taxon>
    </lineage>
</organism>
<evidence type="ECO:0000255" key="1"/>
<evidence type="ECO:0000269" key="2">
    <source>
    </source>
</evidence>
<evidence type="ECO:0000303" key="3">
    <source>
    </source>
</evidence>
<evidence type="ECO:0000305" key="4"/>
<evidence type="ECO:0000305" key="5">
    <source>
    </source>
</evidence>
<gene>
    <name type="ordered locus">At3g13160</name>
    <name type="ORF">MJG19.11</name>
</gene>
<reference key="1">
    <citation type="journal article" date="2000" name="DNA Res.">
        <title>Structural analysis of Arabidopsis thaliana chromosome 3. II. Sequence features of the 4,251,695 bp regions covered by 90 P1, TAC and BAC clones.</title>
        <authorList>
            <person name="Kaneko T."/>
            <person name="Katoh T."/>
            <person name="Sato S."/>
            <person name="Nakamura Y."/>
            <person name="Asamizu E."/>
            <person name="Tabata S."/>
        </authorList>
    </citation>
    <scope>NUCLEOTIDE SEQUENCE [LARGE SCALE GENOMIC DNA]</scope>
    <source>
        <strain>cv. Columbia</strain>
    </source>
</reference>
<reference key="2">
    <citation type="journal article" date="2017" name="Plant J.">
        <title>Araport11: a complete reannotation of the Arabidopsis thaliana reference genome.</title>
        <authorList>
            <person name="Cheng C.Y."/>
            <person name="Krishnakumar V."/>
            <person name="Chan A.P."/>
            <person name="Thibaud-Nissen F."/>
            <person name="Schobel S."/>
            <person name="Town C.D."/>
        </authorList>
    </citation>
    <scope>GENOME REANNOTATION</scope>
    <source>
        <strain>cv. Columbia</strain>
    </source>
</reference>
<reference key="3">
    <citation type="journal article" date="2003" name="Science">
        <title>Empirical analysis of transcriptional activity in the Arabidopsis genome.</title>
        <authorList>
            <person name="Yamada K."/>
            <person name="Lim J."/>
            <person name="Dale J.M."/>
            <person name="Chen H."/>
            <person name="Shinn P."/>
            <person name="Palm C.J."/>
            <person name="Southwick A.M."/>
            <person name="Wu H.C."/>
            <person name="Kim C.J."/>
            <person name="Nguyen M."/>
            <person name="Pham P.K."/>
            <person name="Cheuk R.F."/>
            <person name="Karlin-Newmann G."/>
            <person name="Liu S.X."/>
            <person name="Lam B."/>
            <person name="Sakano H."/>
            <person name="Wu T."/>
            <person name="Yu G."/>
            <person name="Miranda M."/>
            <person name="Quach H.L."/>
            <person name="Tripp M."/>
            <person name="Chang C.H."/>
            <person name="Lee J.M."/>
            <person name="Toriumi M.J."/>
            <person name="Chan M.M."/>
            <person name="Tang C.C."/>
            <person name="Onodera C.S."/>
            <person name="Deng J.M."/>
            <person name="Akiyama K."/>
            <person name="Ansari Y."/>
            <person name="Arakawa T."/>
            <person name="Banh J."/>
            <person name="Banno F."/>
            <person name="Bowser L."/>
            <person name="Brooks S.Y."/>
            <person name="Carninci P."/>
            <person name="Chao Q."/>
            <person name="Choy N."/>
            <person name="Enju A."/>
            <person name="Goldsmith A.D."/>
            <person name="Gurjal M."/>
            <person name="Hansen N.F."/>
            <person name="Hayashizaki Y."/>
            <person name="Johnson-Hopson C."/>
            <person name="Hsuan V.W."/>
            <person name="Iida K."/>
            <person name="Karnes M."/>
            <person name="Khan S."/>
            <person name="Koesema E."/>
            <person name="Ishida J."/>
            <person name="Jiang P.X."/>
            <person name="Jones T."/>
            <person name="Kawai J."/>
            <person name="Kamiya A."/>
            <person name="Meyers C."/>
            <person name="Nakajima M."/>
            <person name="Narusaka M."/>
            <person name="Seki M."/>
            <person name="Sakurai T."/>
            <person name="Satou M."/>
            <person name="Tamse R."/>
            <person name="Vaysberg M."/>
            <person name="Wallender E.K."/>
            <person name="Wong C."/>
            <person name="Yamamura Y."/>
            <person name="Yuan S."/>
            <person name="Shinozaki K."/>
            <person name="Davis R.W."/>
            <person name="Theologis A."/>
            <person name="Ecker J.R."/>
        </authorList>
    </citation>
    <scope>NUCLEOTIDE SEQUENCE [LARGE SCALE MRNA]</scope>
    <source>
        <strain>cv. Columbia</strain>
    </source>
</reference>
<reference key="4">
    <citation type="submission" date="2002-03" db="EMBL/GenBank/DDBJ databases">
        <title>Full-length cDNA from Arabidopsis thaliana.</title>
        <authorList>
            <person name="Brover V.V."/>
            <person name="Troukhan M.E."/>
            <person name="Alexandrov N.A."/>
            <person name="Lu Y.-P."/>
            <person name="Flavell R.B."/>
            <person name="Feldmann K.A."/>
        </authorList>
    </citation>
    <scope>NUCLEOTIDE SEQUENCE [LARGE SCALE MRNA]</scope>
</reference>
<reference key="5">
    <citation type="journal article" date="2004" name="Plant Cell">
        <title>Experimental analysis of the Arabidopsis mitochondrial proteome highlights signaling and regulatory components, provides assessment of targeting prediction programs, and indicates plant-specific mitochondrial proteins.</title>
        <authorList>
            <person name="Heazlewood J.L."/>
            <person name="Tonti-Filippini J.S."/>
            <person name="Gout A.M."/>
            <person name="Day D.A."/>
            <person name="Whelan J."/>
            <person name="Millar A.H."/>
        </authorList>
    </citation>
    <scope>IDENTIFICATION BY MASS SPECTROMETRY</scope>
    <scope>SUBCELLULAR LOCATION [LARGE SCALE ANALYSIS]</scope>
    <source>
        <strain>cv. Landsberg erecta</strain>
    </source>
</reference>
<reference key="6">
    <citation type="journal article" date="2004" name="Plant Cell">
        <title>Genome-wide analysis of Arabidopsis pentatricopeptide repeat proteins reveals their essential role in organelle biogenesis.</title>
        <authorList>
            <person name="Lurin C."/>
            <person name="Andres C."/>
            <person name="Aubourg S."/>
            <person name="Bellaoui M."/>
            <person name="Bitton F."/>
            <person name="Bruyere C."/>
            <person name="Caboche M."/>
            <person name="Debast C."/>
            <person name="Gualberto J."/>
            <person name="Hoffmann B."/>
            <person name="Lecharny A."/>
            <person name="Le Ret M."/>
            <person name="Martin-Magniette M.-L."/>
            <person name="Mireau H."/>
            <person name="Peeters N."/>
            <person name="Renou J.-P."/>
            <person name="Szurek B."/>
            <person name="Taconnat L."/>
            <person name="Small I."/>
        </authorList>
    </citation>
    <scope>GENE FAMILY</scope>
</reference>
<reference key="7">
    <citation type="journal article" date="2023" name="Plant Cell">
        <title>An updated nomenclature for plant ribosomal protein genes.</title>
        <authorList>
            <person name="Scarpin M.R."/>
            <person name="Busche M."/>
            <person name="Martinez R.E."/>
            <person name="Harper L.C."/>
            <person name="Reiser L."/>
            <person name="Szakonyi D."/>
            <person name="Merchante C."/>
            <person name="Lan T."/>
            <person name="Xiong W."/>
            <person name="Mo B."/>
            <person name="Tang G."/>
            <person name="Chen X."/>
            <person name="Bailey-Serres J."/>
            <person name="Browning K.S."/>
            <person name="Brunkard J.O."/>
        </authorList>
    </citation>
    <scope>NOMENCLATURE</scope>
</reference>
<protein>
    <recommendedName>
        <fullName evidence="3">Small ribosomal subunit protein mS79 (rPPR3b)</fullName>
    </recommendedName>
    <alternativeName>
        <fullName>Pentatricopeptide repeat-containing protein At3g13160, mitochondrial</fullName>
    </alternativeName>
</protein>
<name>PP226_ARATH</name>
<dbReference type="EMBL" id="AP000375">
    <property type="protein sequence ID" value="BAB01407.1"/>
    <property type="molecule type" value="Genomic_DNA"/>
</dbReference>
<dbReference type="EMBL" id="CP002686">
    <property type="protein sequence ID" value="AEE75303.1"/>
    <property type="molecule type" value="Genomic_DNA"/>
</dbReference>
<dbReference type="EMBL" id="AY136471">
    <property type="protein sequence ID" value="AAM97136.1"/>
    <property type="molecule type" value="mRNA"/>
</dbReference>
<dbReference type="EMBL" id="BT002597">
    <property type="protein sequence ID" value="AAO00957.1"/>
    <property type="molecule type" value="mRNA"/>
</dbReference>
<dbReference type="EMBL" id="AY088725">
    <property type="protein sequence ID" value="AAM67043.1"/>
    <property type="molecule type" value="mRNA"/>
</dbReference>
<dbReference type="RefSeq" id="NP_566445.1">
    <property type="nucleotide sequence ID" value="NM_112155.2"/>
</dbReference>
<dbReference type="SMR" id="Q9LK57"/>
<dbReference type="BioGRID" id="5839">
    <property type="interactions" value="4"/>
</dbReference>
<dbReference type="FunCoup" id="Q9LK57">
    <property type="interactions" value="384"/>
</dbReference>
<dbReference type="IntAct" id="Q9LK57">
    <property type="interactions" value="3"/>
</dbReference>
<dbReference type="STRING" id="3702.Q9LK57"/>
<dbReference type="GlyGen" id="Q9LK57">
    <property type="glycosylation" value="1 site"/>
</dbReference>
<dbReference type="SwissPalm" id="Q9LK57"/>
<dbReference type="PaxDb" id="3702-AT3G13160.1"/>
<dbReference type="ProteomicsDB" id="248947"/>
<dbReference type="EnsemblPlants" id="AT3G13160.1">
    <property type="protein sequence ID" value="AT3G13160.1"/>
    <property type="gene ID" value="AT3G13160"/>
</dbReference>
<dbReference type="GeneID" id="820505"/>
<dbReference type="Gramene" id="AT3G13160.1">
    <property type="protein sequence ID" value="AT3G13160.1"/>
    <property type="gene ID" value="AT3G13160"/>
</dbReference>
<dbReference type="KEGG" id="ath:AT3G13160"/>
<dbReference type="Araport" id="AT3G13160"/>
<dbReference type="TAIR" id="AT3G13160">
    <property type="gene designation" value="RPPR3B"/>
</dbReference>
<dbReference type="eggNOG" id="KOG4197">
    <property type="taxonomic scope" value="Eukaryota"/>
</dbReference>
<dbReference type="HOGENOM" id="CLU_002706_10_3_1"/>
<dbReference type="InParanoid" id="Q9LK57"/>
<dbReference type="OMA" id="AEWFRKN"/>
<dbReference type="PhylomeDB" id="Q9LK57"/>
<dbReference type="PRO" id="PR:Q9LK57"/>
<dbReference type="Proteomes" id="UP000006548">
    <property type="component" value="Chromosome 3"/>
</dbReference>
<dbReference type="ExpressionAtlas" id="Q9LK57">
    <property type="expression patterns" value="baseline and differential"/>
</dbReference>
<dbReference type="GO" id="GO:0005829">
    <property type="term" value="C:cytosol"/>
    <property type="evidence" value="ECO:0007005"/>
    <property type="project" value="TAIR"/>
</dbReference>
<dbReference type="GO" id="GO:0005739">
    <property type="term" value="C:mitochondrion"/>
    <property type="evidence" value="ECO:0007005"/>
    <property type="project" value="TAIR"/>
</dbReference>
<dbReference type="GO" id="GO:1990904">
    <property type="term" value="C:ribonucleoprotein complex"/>
    <property type="evidence" value="ECO:0007669"/>
    <property type="project" value="UniProtKB-KW"/>
</dbReference>
<dbReference type="GO" id="GO:0005840">
    <property type="term" value="C:ribosome"/>
    <property type="evidence" value="ECO:0007669"/>
    <property type="project" value="UniProtKB-KW"/>
</dbReference>
<dbReference type="GO" id="GO:0003729">
    <property type="term" value="F:mRNA binding"/>
    <property type="evidence" value="ECO:0000314"/>
    <property type="project" value="TAIR"/>
</dbReference>
<dbReference type="FunFam" id="1.25.40.10:FF:001070">
    <property type="entry name" value="Pentatricopeptide repeat-containing protein At1g11630, mitochondrial"/>
    <property type="match status" value="1"/>
</dbReference>
<dbReference type="FunFam" id="1.25.40.10:FF:001833">
    <property type="entry name" value="Pentatricopeptide repeat-containing protein At3g13160, mitochondrial"/>
    <property type="match status" value="1"/>
</dbReference>
<dbReference type="Gene3D" id="1.25.40.10">
    <property type="entry name" value="Tetratricopeptide repeat domain"/>
    <property type="match status" value="2"/>
</dbReference>
<dbReference type="InterPro" id="IPR051114">
    <property type="entry name" value="Mito_RNA_Proc_CCM1"/>
</dbReference>
<dbReference type="InterPro" id="IPR002885">
    <property type="entry name" value="Pentatricopeptide_rpt"/>
</dbReference>
<dbReference type="InterPro" id="IPR011990">
    <property type="entry name" value="TPR-like_helical_dom_sf"/>
</dbReference>
<dbReference type="NCBIfam" id="TIGR00756">
    <property type="entry name" value="PPR"/>
    <property type="match status" value="4"/>
</dbReference>
<dbReference type="PANTHER" id="PTHR47934">
    <property type="entry name" value="PENTATRICOPEPTIDE REPEAT-CONTAINING PROTEIN PET309, MITOCHONDRIAL"/>
    <property type="match status" value="1"/>
</dbReference>
<dbReference type="PANTHER" id="PTHR47934:SF26">
    <property type="entry name" value="SMALL RIBOSOMAL SUBUNIT PROTEIN MS78 (RPPR3A)"/>
    <property type="match status" value="1"/>
</dbReference>
<dbReference type="Pfam" id="PF01535">
    <property type="entry name" value="PPR"/>
    <property type="match status" value="1"/>
</dbReference>
<dbReference type="Pfam" id="PF13041">
    <property type="entry name" value="PPR_2"/>
    <property type="match status" value="3"/>
</dbReference>
<dbReference type="PROSITE" id="PS51375">
    <property type="entry name" value="PPR"/>
    <property type="match status" value="8"/>
</dbReference>
<keyword id="KW-0496">Mitochondrion</keyword>
<keyword id="KW-1185">Reference proteome</keyword>
<keyword id="KW-0677">Repeat</keyword>
<keyword id="KW-0687">Ribonucleoprotein</keyword>
<keyword id="KW-0689">Ribosomal protein</keyword>
<keyword id="KW-0809">Transit peptide</keyword>